<feature type="chain" id="PRO_1000001937" description="Glutamate--tRNA ligase">
    <location>
        <begin position="1"/>
        <end position="494"/>
    </location>
</feature>
<feature type="short sequence motif" description="'HIGH' region" evidence="1">
    <location>
        <begin position="10"/>
        <end position="20"/>
    </location>
</feature>
<feature type="short sequence motif" description="'KMSKS' region" evidence="1">
    <location>
        <begin position="251"/>
        <end position="255"/>
    </location>
</feature>
<feature type="binding site" evidence="1">
    <location>
        <position position="107"/>
    </location>
    <ligand>
        <name>Zn(2+)</name>
        <dbReference type="ChEBI" id="CHEBI:29105"/>
    </ligand>
</feature>
<feature type="binding site" evidence="1">
    <location>
        <position position="109"/>
    </location>
    <ligand>
        <name>Zn(2+)</name>
        <dbReference type="ChEBI" id="CHEBI:29105"/>
    </ligand>
</feature>
<feature type="binding site" evidence="1">
    <location>
        <position position="134"/>
    </location>
    <ligand>
        <name>Zn(2+)</name>
        <dbReference type="ChEBI" id="CHEBI:29105"/>
    </ligand>
</feature>
<feature type="binding site" evidence="1">
    <location>
        <position position="136"/>
    </location>
    <ligand>
        <name>Zn(2+)</name>
        <dbReference type="ChEBI" id="CHEBI:29105"/>
    </ligand>
</feature>
<feature type="binding site" evidence="1">
    <location>
        <position position="254"/>
    </location>
    <ligand>
        <name>ATP</name>
        <dbReference type="ChEBI" id="CHEBI:30616"/>
    </ligand>
</feature>
<accession>A6V2T9</accession>
<protein>
    <recommendedName>
        <fullName evidence="1">Glutamate--tRNA ligase</fullName>
        <ecNumber evidence="1">6.1.1.17</ecNumber>
    </recommendedName>
    <alternativeName>
        <fullName evidence="1">Glutamyl-tRNA synthetase</fullName>
        <shortName evidence="1">GluRS</shortName>
    </alternativeName>
</protein>
<reference key="1">
    <citation type="submission" date="2007-06" db="EMBL/GenBank/DDBJ databases">
        <authorList>
            <person name="Dodson R.J."/>
            <person name="Harkins D."/>
            <person name="Paulsen I.T."/>
        </authorList>
    </citation>
    <scope>NUCLEOTIDE SEQUENCE [LARGE SCALE GENOMIC DNA]</scope>
    <source>
        <strain>DSM 24068 / PA7</strain>
    </source>
</reference>
<dbReference type="EC" id="6.1.1.17" evidence="1"/>
<dbReference type="EMBL" id="CP000744">
    <property type="protein sequence ID" value="ABR82484.1"/>
    <property type="molecule type" value="Genomic_DNA"/>
</dbReference>
<dbReference type="RefSeq" id="WP_012075044.1">
    <property type="nucleotide sequence ID" value="NC_009656.1"/>
</dbReference>
<dbReference type="SMR" id="A6V2T9"/>
<dbReference type="KEGG" id="pap:PSPA7_1994"/>
<dbReference type="HOGENOM" id="CLU_015768_6_3_6"/>
<dbReference type="Proteomes" id="UP000001582">
    <property type="component" value="Chromosome"/>
</dbReference>
<dbReference type="GO" id="GO:0005829">
    <property type="term" value="C:cytosol"/>
    <property type="evidence" value="ECO:0007669"/>
    <property type="project" value="TreeGrafter"/>
</dbReference>
<dbReference type="GO" id="GO:0005524">
    <property type="term" value="F:ATP binding"/>
    <property type="evidence" value="ECO:0007669"/>
    <property type="project" value="UniProtKB-UniRule"/>
</dbReference>
<dbReference type="GO" id="GO:0004818">
    <property type="term" value="F:glutamate-tRNA ligase activity"/>
    <property type="evidence" value="ECO:0007669"/>
    <property type="project" value="UniProtKB-UniRule"/>
</dbReference>
<dbReference type="GO" id="GO:0000049">
    <property type="term" value="F:tRNA binding"/>
    <property type="evidence" value="ECO:0007669"/>
    <property type="project" value="InterPro"/>
</dbReference>
<dbReference type="GO" id="GO:0008270">
    <property type="term" value="F:zinc ion binding"/>
    <property type="evidence" value="ECO:0007669"/>
    <property type="project" value="UniProtKB-UniRule"/>
</dbReference>
<dbReference type="GO" id="GO:0006424">
    <property type="term" value="P:glutamyl-tRNA aminoacylation"/>
    <property type="evidence" value="ECO:0007669"/>
    <property type="project" value="UniProtKB-UniRule"/>
</dbReference>
<dbReference type="CDD" id="cd00808">
    <property type="entry name" value="GluRS_core"/>
    <property type="match status" value="1"/>
</dbReference>
<dbReference type="FunFam" id="1.10.10.350:FF:000007">
    <property type="entry name" value="Glutamate--tRNA ligase"/>
    <property type="match status" value="1"/>
</dbReference>
<dbReference type="FunFam" id="3.40.50.620:FF:000045">
    <property type="entry name" value="Glutamate--tRNA ligase, mitochondrial"/>
    <property type="match status" value="1"/>
</dbReference>
<dbReference type="Gene3D" id="1.10.10.350">
    <property type="match status" value="1"/>
</dbReference>
<dbReference type="Gene3D" id="3.40.50.620">
    <property type="entry name" value="HUPs"/>
    <property type="match status" value="1"/>
</dbReference>
<dbReference type="HAMAP" id="MF_00022">
    <property type="entry name" value="Glu_tRNA_synth_type1"/>
    <property type="match status" value="1"/>
</dbReference>
<dbReference type="InterPro" id="IPR045462">
    <property type="entry name" value="aa-tRNA-synth_I_cd-bd"/>
</dbReference>
<dbReference type="InterPro" id="IPR020751">
    <property type="entry name" value="aa-tRNA-synth_I_codon-bd_sub2"/>
</dbReference>
<dbReference type="InterPro" id="IPR001412">
    <property type="entry name" value="aa-tRNA-synth_I_CS"/>
</dbReference>
<dbReference type="InterPro" id="IPR008925">
    <property type="entry name" value="aa_tRNA-synth_I_cd-bd_sf"/>
</dbReference>
<dbReference type="InterPro" id="IPR004527">
    <property type="entry name" value="Glu-tRNA-ligase_bac/mito"/>
</dbReference>
<dbReference type="InterPro" id="IPR000924">
    <property type="entry name" value="Glu/Gln-tRNA-synth"/>
</dbReference>
<dbReference type="InterPro" id="IPR020058">
    <property type="entry name" value="Glu/Gln-tRNA-synth_Ib_cat-dom"/>
</dbReference>
<dbReference type="InterPro" id="IPR049940">
    <property type="entry name" value="GluQ/Sye"/>
</dbReference>
<dbReference type="InterPro" id="IPR033910">
    <property type="entry name" value="GluRS_core"/>
</dbReference>
<dbReference type="InterPro" id="IPR014729">
    <property type="entry name" value="Rossmann-like_a/b/a_fold"/>
</dbReference>
<dbReference type="NCBIfam" id="TIGR00464">
    <property type="entry name" value="gltX_bact"/>
    <property type="match status" value="1"/>
</dbReference>
<dbReference type="PANTHER" id="PTHR43311">
    <property type="entry name" value="GLUTAMATE--TRNA LIGASE"/>
    <property type="match status" value="1"/>
</dbReference>
<dbReference type="PANTHER" id="PTHR43311:SF2">
    <property type="entry name" value="GLUTAMATE--TRNA LIGASE, MITOCHONDRIAL-RELATED"/>
    <property type="match status" value="1"/>
</dbReference>
<dbReference type="Pfam" id="PF19269">
    <property type="entry name" value="Anticodon_2"/>
    <property type="match status" value="1"/>
</dbReference>
<dbReference type="Pfam" id="PF00749">
    <property type="entry name" value="tRNA-synt_1c"/>
    <property type="match status" value="1"/>
</dbReference>
<dbReference type="PRINTS" id="PR00987">
    <property type="entry name" value="TRNASYNTHGLU"/>
</dbReference>
<dbReference type="SUPFAM" id="SSF48163">
    <property type="entry name" value="An anticodon-binding domain of class I aminoacyl-tRNA synthetases"/>
    <property type="match status" value="1"/>
</dbReference>
<dbReference type="SUPFAM" id="SSF52374">
    <property type="entry name" value="Nucleotidylyl transferase"/>
    <property type="match status" value="1"/>
</dbReference>
<dbReference type="PROSITE" id="PS00178">
    <property type="entry name" value="AA_TRNA_LIGASE_I"/>
    <property type="match status" value="1"/>
</dbReference>
<proteinExistence type="inferred from homology"/>
<name>SYE_PSEP7</name>
<comment type="function">
    <text evidence="1">Catalyzes the attachment of glutamate to tRNA(Glu) in a two-step reaction: glutamate is first activated by ATP to form Glu-AMP and then transferred to the acceptor end of tRNA(Glu).</text>
</comment>
<comment type="catalytic activity">
    <reaction evidence="1">
        <text>tRNA(Glu) + L-glutamate + ATP = L-glutamyl-tRNA(Glu) + AMP + diphosphate</text>
        <dbReference type="Rhea" id="RHEA:23540"/>
        <dbReference type="Rhea" id="RHEA-COMP:9663"/>
        <dbReference type="Rhea" id="RHEA-COMP:9680"/>
        <dbReference type="ChEBI" id="CHEBI:29985"/>
        <dbReference type="ChEBI" id="CHEBI:30616"/>
        <dbReference type="ChEBI" id="CHEBI:33019"/>
        <dbReference type="ChEBI" id="CHEBI:78442"/>
        <dbReference type="ChEBI" id="CHEBI:78520"/>
        <dbReference type="ChEBI" id="CHEBI:456215"/>
        <dbReference type="EC" id="6.1.1.17"/>
    </reaction>
</comment>
<comment type="cofactor">
    <cofactor evidence="1">
        <name>Zn(2+)</name>
        <dbReference type="ChEBI" id="CHEBI:29105"/>
    </cofactor>
    <text evidence="1">Binds 1 zinc ion per subunit.</text>
</comment>
<comment type="subunit">
    <text evidence="1">Monomer.</text>
</comment>
<comment type="subcellular location">
    <subcellularLocation>
        <location evidence="1">Cytoplasm</location>
    </subcellularLocation>
</comment>
<comment type="similarity">
    <text evidence="1">Belongs to the class-I aminoacyl-tRNA synthetase family. Glutamate--tRNA ligase type 1 subfamily.</text>
</comment>
<evidence type="ECO:0000255" key="1">
    <source>
        <dbReference type="HAMAP-Rule" id="MF_00022"/>
    </source>
</evidence>
<keyword id="KW-0030">Aminoacyl-tRNA synthetase</keyword>
<keyword id="KW-0067">ATP-binding</keyword>
<keyword id="KW-0963">Cytoplasm</keyword>
<keyword id="KW-0436">Ligase</keyword>
<keyword id="KW-0479">Metal-binding</keyword>
<keyword id="KW-0547">Nucleotide-binding</keyword>
<keyword id="KW-0648">Protein biosynthesis</keyword>
<keyword id="KW-0862">Zinc</keyword>
<sequence length="494" mass="56718">MTTVRTRIAPSPTGDPHVGTAYIALFNLCFARQHGGQFILRIEDTDQLRSTRESEQQIFDALRWLGIEWDEGPDVGGPHGPYRQSERGHIYKKYSDELVEQGHAFTCFCTPERLDAVRAEQMARKETPRYDGHCMHLPKDEVQRRVAAGESHVTRMKVPTEGVCVVPDMLRGNVEIPWDRMDMQVLMKADGLPTYFLANVVDDHLMGITHVLRGEEWLPSAPKLIKLYEYFGWEQPQLCYMPLLRNPDKSKLSKRKNPTSITFYERMGYLPQALLNYLGRMGWSMPDEREKFTLAEMIEHFDLSRVSLGGPIFDLEKLSWLNGQWIREQSVEEFAREVQKWALNPEYLMKIAPHVQGRVENFSQIAPLAGFFFSGGVPLDASLFEHKKLDPTQVRQVLQLVLWKLESLRQWEKERITGCIQAVAEHLQLKLRDVMPLMFPAITGHASSVSVLDAMEILGADLSRYRLRQALELLGGASKKETKEWEKIRDAIPG</sequence>
<gene>
    <name evidence="1" type="primary">gltX</name>
    <name type="ordered locus">PSPA7_1994</name>
</gene>
<organism>
    <name type="scientific">Pseudomonas paraeruginosa (strain DSM 24068 / PA7)</name>
    <name type="common">Pseudomonas aeruginosa (strain PA7)</name>
    <dbReference type="NCBI Taxonomy" id="381754"/>
    <lineage>
        <taxon>Bacteria</taxon>
        <taxon>Pseudomonadati</taxon>
        <taxon>Pseudomonadota</taxon>
        <taxon>Gammaproteobacteria</taxon>
        <taxon>Pseudomonadales</taxon>
        <taxon>Pseudomonadaceae</taxon>
        <taxon>Pseudomonas</taxon>
        <taxon>Pseudomonas paraeruginosa</taxon>
    </lineage>
</organism>